<feature type="chain" id="PRO_1000135732" description="3-isopropylmalate dehydratase large subunit">
    <location>
        <begin position="1"/>
        <end position="427"/>
    </location>
</feature>
<feature type="binding site" evidence="1">
    <location>
        <position position="308"/>
    </location>
    <ligand>
        <name>[4Fe-4S] cluster</name>
        <dbReference type="ChEBI" id="CHEBI:49883"/>
    </ligand>
</feature>
<feature type="binding site" evidence="1">
    <location>
        <position position="368"/>
    </location>
    <ligand>
        <name>[4Fe-4S] cluster</name>
        <dbReference type="ChEBI" id="CHEBI:49883"/>
    </ligand>
</feature>
<feature type="binding site" evidence="1">
    <location>
        <position position="371"/>
    </location>
    <ligand>
        <name>[4Fe-4S] cluster</name>
        <dbReference type="ChEBI" id="CHEBI:49883"/>
    </ligand>
</feature>
<protein>
    <recommendedName>
        <fullName evidence="1">3-isopropylmalate dehydratase large subunit</fullName>
        <ecNumber evidence="1">4.2.1.33</ecNumber>
    </recommendedName>
    <alternativeName>
        <fullName evidence="1">Alpha-IPM isomerase</fullName>
        <shortName evidence="1">IPMI</shortName>
    </alternativeName>
    <alternativeName>
        <fullName evidence="1">Isopropylmalate isomerase</fullName>
    </alternativeName>
</protein>
<evidence type="ECO:0000255" key="1">
    <source>
        <dbReference type="HAMAP-Rule" id="MF_01027"/>
    </source>
</evidence>
<dbReference type="EC" id="4.2.1.33" evidence="1"/>
<dbReference type="EMBL" id="CP001124">
    <property type="protein sequence ID" value="ACH39741.1"/>
    <property type="molecule type" value="Genomic_DNA"/>
</dbReference>
<dbReference type="RefSeq" id="WP_012531167.1">
    <property type="nucleotide sequence ID" value="NC_011146.1"/>
</dbReference>
<dbReference type="SMR" id="B5EHU2"/>
<dbReference type="STRING" id="404380.Gbem_2737"/>
<dbReference type="KEGG" id="gbm:Gbem_2737"/>
<dbReference type="eggNOG" id="COG0065">
    <property type="taxonomic scope" value="Bacteria"/>
</dbReference>
<dbReference type="HOGENOM" id="CLU_006714_3_4_7"/>
<dbReference type="OrthoDB" id="9764318at2"/>
<dbReference type="UniPathway" id="UPA00048">
    <property type="reaction ID" value="UER00071"/>
</dbReference>
<dbReference type="Proteomes" id="UP000008825">
    <property type="component" value="Chromosome"/>
</dbReference>
<dbReference type="GO" id="GO:0003861">
    <property type="term" value="F:3-isopropylmalate dehydratase activity"/>
    <property type="evidence" value="ECO:0007669"/>
    <property type="project" value="UniProtKB-UniRule"/>
</dbReference>
<dbReference type="GO" id="GO:0051539">
    <property type="term" value="F:4 iron, 4 sulfur cluster binding"/>
    <property type="evidence" value="ECO:0007669"/>
    <property type="project" value="UniProtKB-KW"/>
</dbReference>
<dbReference type="GO" id="GO:0046872">
    <property type="term" value="F:metal ion binding"/>
    <property type="evidence" value="ECO:0007669"/>
    <property type="project" value="UniProtKB-KW"/>
</dbReference>
<dbReference type="GO" id="GO:0009098">
    <property type="term" value="P:L-leucine biosynthetic process"/>
    <property type="evidence" value="ECO:0007669"/>
    <property type="project" value="UniProtKB-UniRule"/>
</dbReference>
<dbReference type="CDD" id="cd01583">
    <property type="entry name" value="IPMI"/>
    <property type="match status" value="1"/>
</dbReference>
<dbReference type="Gene3D" id="3.30.499.10">
    <property type="entry name" value="Aconitase, domain 3"/>
    <property type="match status" value="2"/>
</dbReference>
<dbReference type="HAMAP" id="MF_01027">
    <property type="entry name" value="LeuC_type2"/>
    <property type="match status" value="1"/>
</dbReference>
<dbReference type="InterPro" id="IPR015931">
    <property type="entry name" value="Acnase/IPM_dHydase_lsu_aba_1/3"/>
</dbReference>
<dbReference type="InterPro" id="IPR001030">
    <property type="entry name" value="Acoase/IPM_deHydtase_lsu_aba"/>
</dbReference>
<dbReference type="InterPro" id="IPR018136">
    <property type="entry name" value="Aconitase_4Fe-4S_BS"/>
</dbReference>
<dbReference type="InterPro" id="IPR036008">
    <property type="entry name" value="Aconitase_4Fe-4S_dom"/>
</dbReference>
<dbReference type="InterPro" id="IPR011826">
    <property type="entry name" value="HAcnase/IPMdehydase_lsu_prok"/>
</dbReference>
<dbReference type="InterPro" id="IPR006251">
    <property type="entry name" value="Homoacnase/IPMdehydase_lsu"/>
</dbReference>
<dbReference type="InterPro" id="IPR050067">
    <property type="entry name" value="IPM_dehydratase_rel_enz"/>
</dbReference>
<dbReference type="InterPro" id="IPR033941">
    <property type="entry name" value="IPMI_cat"/>
</dbReference>
<dbReference type="NCBIfam" id="TIGR01343">
    <property type="entry name" value="hacA_fam"/>
    <property type="match status" value="1"/>
</dbReference>
<dbReference type="NCBIfam" id="TIGR02086">
    <property type="entry name" value="IPMI_arch"/>
    <property type="match status" value="1"/>
</dbReference>
<dbReference type="NCBIfam" id="NF001614">
    <property type="entry name" value="PRK00402.1"/>
    <property type="match status" value="1"/>
</dbReference>
<dbReference type="PANTHER" id="PTHR43822:SF16">
    <property type="entry name" value="3-ISOPROPYLMALATE DEHYDRATASE LARGE SUBUNIT 2"/>
    <property type="match status" value="1"/>
</dbReference>
<dbReference type="PANTHER" id="PTHR43822">
    <property type="entry name" value="HOMOACONITASE, MITOCHONDRIAL-RELATED"/>
    <property type="match status" value="1"/>
</dbReference>
<dbReference type="Pfam" id="PF00330">
    <property type="entry name" value="Aconitase"/>
    <property type="match status" value="2"/>
</dbReference>
<dbReference type="PRINTS" id="PR00415">
    <property type="entry name" value="ACONITASE"/>
</dbReference>
<dbReference type="SUPFAM" id="SSF53732">
    <property type="entry name" value="Aconitase iron-sulfur domain"/>
    <property type="match status" value="1"/>
</dbReference>
<dbReference type="PROSITE" id="PS00450">
    <property type="entry name" value="ACONITASE_1"/>
    <property type="match status" value="1"/>
</dbReference>
<dbReference type="PROSITE" id="PS01244">
    <property type="entry name" value="ACONITASE_2"/>
    <property type="match status" value="1"/>
</dbReference>
<accession>B5EHU2</accession>
<organism>
    <name type="scientific">Citrifermentans bemidjiense (strain ATCC BAA-1014 / DSM 16622 / JCM 12645 / Bem)</name>
    <name type="common">Geobacter bemidjiensis</name>
    <dbReference type="NCBI Taxonomy" id="404380"/>
    <lineage>
        <taxon>Bacteria</taxon>
        <taxon>Pseudomonadati</taxon>
        <taxon>Thermodesulfobacteriota</taxon>
        <taxon>Desulfuromonadia</taxon>
        <taxon>Geobacterales</taxon>
        <taxon>Geobacteraceae</taxon>
        <taxon>Citrifermentans</taxon>
    </lineage>
</organism>
<gene>
    <name evidence="1" type="primary">leuC</name>
    <name type="ordered locus">Gbem_2737</name>
</gene>
<reference key="1">
    <citation type="submission" date="2008-07" db="EMBL/GenBank/DDBJ databases">
        <title>Complete sequence of Geobacter bemidjiensis BEM.</title>
        <authorList>
            <consortium name="US DOE Joint Genome Institute"/>
            <person name="Lucas S."/>
            <person name="Copeland A."/>
            <person name="Lapidus A."/>
            <person name="Glavina del Rio T."/>
            <person name="Dalin E."/>
            <person name="Tice H."/>
            <person name="Bruce D."/>
            <person name="Goodwin L."/>
            <person name="Pitluck S."/>
            <person name="Kiss H."/>
            <person name="Brettin T."/>
            <person name="Detter J.C."/>
            <person name="Han C."/>
            <person name="Kuske C.R."/>
            <person name="Schmutz J."/>
            <person name="Larimer F."/>
            <person name="Land M."/>
            <person name="Hauser L."/>
            <person name="Kyrpides N."/>
            <person name="Lykidis A."/>
            <person name="Lovley D."/>
            <person name="Richardson P."/>
        </authorList>
    </citation>
    <scope>NUCLEOTIDE SEQUENCE [LARGE SCALE GENOMIC DNA]</scope>
    <source>
        <strain>ATCC BAA-1014 / DSM 16622 / JCM 12645 / Bem</strain>
    </source>
</reference>
<keyword id="KW-0004">4Fe-4S</keyword>
<keyword id="KW-0028">Amino-acid biosynthesis</keyword>
<keyword id="KW-0100">Branched-chain amino acid biosynthesis</keyword>
<keyword id="KW-0408">Iron</keyword>
<keyword id="KW-0411">Iron-sulfur</keyword>
<keyword id="KW-0432">Leucine biosynthesis</keyword>
<keyword id="KW-0456">Lyase</keyword>
<keyword id="KW-0479">Metal-binding</keyword>
<keyword id="KW-1185">Reference proteome</keyword>
<comment type="function">
    <text evidence="1">Catalyzes the isomerization between 2-isopropylmalate and 3-isopropylmalate, via the formation of 2-isopropylmaleate.</text>
</comment>
<comment type="catalytic activity">
    <reaction evidence="1">
        <text>(2R,3S)-3-isopropylmalate = (2S)-2-isopropylmalate</text>
        <dbReference type="Rhea" id="RHEA:32287"/>
        <dbReference type="ChEBI" id="CHEBI:1178"/>
        <dbReference type="ChEBI" id="CHEBI:35121"/>
        <dbReference type="EC" id="4.2.1.33"/>
    </reaction>
</comment>
<comment type="cofactor">
    <cofactor evidence="1">
        <name>[4Fe-4S] cluster</name>
        <dbReference type="ChEBI" id="CHEBI:49883"/>
    </cofactor>
    <text evidence="1">Binds 1 [4Fe-4S] cluster per subunit.</text>
</comment>
<comment type="pathway">
    <text evidence="1">Amino-acid biosynthesis; L-leucine biosynthesis; L-leucine from 3-methyl-2-oxobutanoate: step 2/4.</text>
</comment>
<comment type="subunit">
    <text evidence="1">Heterodimer of LeuC and LeuD.</text>
</comment>
<comment type="similarity">
    <text evidence="1">Belongs to the aconitase/IPM isomerase family. LeuC type 2 subfamily.</text>
</comment>
<proteinExistence type="inferred from homology"/>
<name>LEUC_CITBB</name>
<sequence>MGMTTAQKIFSAHLVDEPFAGTKVLSIDVVMCHEITTPIAIADLMARGKDRVFDPTKIKAVIDHVTPSKDSKTATQAKMLRDWARRHDIKDFFDIGANGVCHALFPEKGFIRPGNTVIMGDSHTCTHGAFGAFAAGVGTTDLEVGILKGVCAFREPKTIRVNLNGTLPKGVFAKDAILRVIGHLGVNGATDRVIEFGGPVVAQMTMESRMTLCNMAIEAGGTSGICMPDQVTVDYLWPFISGSFGSKEEALAAYSVWCSDADAAYEQVIDLDLSDLAPLCTFGYKPDQVKSVTEMAGTQVDQVYLGSCTNGRLEDLRVAAQILKGKKIASHVRAILSPATPQIYKDAVAEGLIQIFMDAGFCVTNPTCGACLGMSNGVLAEGEVCASTTNRNFMGRMGKGGMVHLLSPATAAASAIEGKIADPRNYL</sequence>